<organism>
    <name type="scientific">Rhodococcus erythropolis (strain PR4 / NBRC 100887)</name>
    <dbReference type="NCBI Taxonomy" id="234621"/>
    <lineage>
        <taxon>Bacteria</taxon>
        <taxon>Bacillati</taxon>
        <taxon>Actinomycetota</taxon>
        <taxon>Actinomycetes</taxon>
        <taxon>Mycobacteriales</taxon>
        <taxon>Nocardiaceae</taxon>
        <taxon>Rhodococcus</taxon>
        <taxon>Rhodococcus erythropolis group</taxon>
    </lineage>
</organism>
<gene>
    <name evidence="1" type="primary">recO</name>
    <name type="ordered locus">RER_37130</name>
</gene>
<accession>C1A1D6</accession>
<sequence>MRLYRDTAVVLRLHKLGEADHIVTLLTRQFGLVRAVAKGVRRTTSKFGARLEPFAHIDVQLLPGKNLDIITQVQTVDAFATDIVDDYSRYTTACAVLETAERLAGEERAPAPQLQRLTVGALRAIAEQARPVEFVLDAFLLRAMGYAGWAPALEECARCSAPGPHRAFHVAAGGAVCTYCRPAGAATPSPGVLDLMEALLRGEWEGTDSAPATLRTQASGLVAAHLQWHLERQLRTLPLIERSRPHAAVEVDLSVRQDGTRDSTTRTANSA</sequence>
<dbReference type="EMBL" id="AP008957">
    <property type="protein sequence ID" value="BAH34421.1"/>
    <property type="molecule type" value="Genomic_DNA"/>
</dbReference>
<dbReference type="RefSeq" id="WP_019749002.1">
    <property type="nucleotide sequence ID" value="NC_012490.1"/>
</dbReference>
<dbReference type="SMR" id="C1A1D6"/>
<dbReference type="KEGG" id="rer:RER_37130"/>
<dbReference type="PATRIC" id="fig|234621.6.peg.4234"/>
<dbReference type="eggNOG" id="COG1381">
    <property type="taxonomic scope" value="Bacteria"/>
</dbReference>
<dbReference type="HOGENOM" id="CLU_066632_1_1_11"/>
<dbReference type="Proteomes" id="UP000002204">
    <property type="component" value="Chromosome"/>
</dbReference>
<dbReference type="GO" id="GO:0043590">
    <property type="term" value="C:bacterial nucleoid"/>
    <property type="evidence" value="ECO:0007669"/>
    <property type="project" value="TreeGrafter"/>
</dbReference>
<dbReference type="GO" id="GO:0006310">
    <property type="term" value="P:DNA recombination"/>
    <property type="evidence" value="ECO:0007669"/>
    <property type="project" value="UniProtKB-UniRule"/>
</dbReference>
<dbReference type="GO" id="GO:0006302">
    <property type="term" value="P:double-strand break repair"/>
    <property type="evidence" value="ECO:0007669"/>
    <property type="project" value="TreeGrafter"/>
</dbReference>
<dbReference type="Gene3D" id="2.40.50.140">
    <property type="entry name" value="Nucleic acid-binding proteins"/>
    <property type="match status" value="1"/>
</dbReference>
<dbReference type="Gene3D" id="1.20.1440.120">
    <property type="entry name" value="Recombination protein O, C-terminal domain"/>
    <property type="match status" value="1"/>
</dbReference>
<dbReference type="HAMAP" id="MF_00201">
    <property type="entry name" value="RecO"/>
    <property type="match status" value="1"/>
</dbReference>
<dbReference type="InterPro" id="IPR037278">
    <property type="entry name" value="ARFGAP/RecO"/>
</dbReference>
<dbReference type="InterPro" id="IPR022572">
    <property type="entry name" value="DNA_rep/recomb_RecO_N"/>
</dbReference>
<dbReference type="InterPro" id="IPR012340">
    <property type="entry name" value="NA-bd_OB-fold"/>
</dbReference>
<dbReference type="InterPro" id="IPR003717">
    <property type="entry name" value="RecO"/>
</dbReference>
<dbReference type="InterPro" id="IPR042242">
    <property type="entry name" value="RecO_C"/>
</dbReference>
<dbReference type="NCBIfam" id="TIGR00613">
    <property type="entry name" value="reco"/>
    <property type="match status" value="1"/>
</dbReference>
<dbReference type="PANTHER" id="PTHR33991">
    <property type="entry name" value="DNA REPAIR PROTEIN RECO"/>
    <property type="match status" value="1"/>
</dbReference>
<dbReference type="PANTHER" id="PTHR33991:SF1">
    <property type="entry name" value="DNA REPAIR PROTEIN RECO"/>
    <property type="match status" value="1"/>
</dbReference>
<dbReference type="Pfam" id="PF02565">
    <property type="entry name" value="RecO_C"/>
    <property type="match status" value="1"/>
</dbReference>
<dbReference type="Pfam" id="PF11967">
    <property type="entry name" value="RecO_N"/>
    <property type="match status" value="1"/>
</dbReference>
<dbReference type="SUPFAM" id="SSF57863">
    <property type="entry name" value="ArfGap/RecO-like zinc finger"/>
    <property type="match status" value="1"/>
</dbReference>
<dbReference type="SUPFAM" id="SSF50249">
    <property type="entry name" value="Nucleic acid-binding proteins"/>
    <property type="match status" value="1"/>
</dbReference>
<feature type="chain" id="PRO_1000204107" description="DNA repair protein RecO">
    <location>
        <begin position="1"/>
        <end position="271"/>
    </location>
</feature>
<evidence type="ECO:0000255" key="1">
    <source>
        <dbReference type="HAMAP-Rule" id="MF_00201"/>
    </source>
</evidence>
<keyword id="KW-0227">DNA damage</keyword>
<keyword id="KW-0233">DNA recombination</keyword>
<keyword id="KW-0234">DNA repair</keyword>
<proteinExistence type="inferred from homology"/>
<reference key="1">
    <citation type="submission" date="2005-03" db="EMBL/GenBank/DDBJ databases">
        <title>Comparison of the complete genome sequences of Rhodococcus erythropolis PR4 and Rhodococcus opacus B4.</title>
        <authorList>
            <person name="Takarada H."/>
            <person name="Sekine M."/>
            <person name="Hosoyama A."/>
            <person name="Yamada R."/>
            <person name="Fujisawa T."/>
            <person name="Omata S."/>
            <person name="Shimizu A."/>
            <person name="Tsukatani N."/>
            <person name="Tanikawa S."/>
            <person name="Fujita N."/>
            <person name="Harayama S."/>
        </authorList>
    </citation>
    <scope>NUCLEOTIDE SEQUENCE [LARGE SCALE GENOMIC DNA]</scope>
    <source>
        <strain>PR4 / NBRC 100887</strain>
    </source>
</reference>
<name>RECO_RHOE4</name>
<comment type="function">
    <text evidence="1">Involved in DNA repair and RecF pathway recombination.</text>
</comment>
<comment type="similarity">
    <text evidence="1">Belongs to the RecO family.</text>
</comment>
<protein>
    <recommendedName>
        <fullName evidence="1">DNA repair protein RecO</fullName>
    </recommendedName>
    <alternativeName>
        <fullName evidence="1">Recombination protein O</fullName>
    </alternativeName>
</protein>